<reference key="1">
    <citation type="submission" date="2006-01" db="EMBL/GenBank/DDBJ databases">
        <title>Complete sequence of Rhodopseudomonas palustris HaA2.</title>
        <authorList>
            <consortium name="US DOE Joint Genome Institute"/>
            <person name="Copeland A."/>
            <person name="Lucas S."/>
            <person name="Lapidus A."/>
            <person name="Barry K."/>
            <person name="Detter J.C."/>
            <person name="Glavina T."/>
            <person name="Hammon N."/>
            <person name="Israni S."/>
            <person name="Pitluck S."/>
            <person name="Chain P."/>
            <person name="Malfatti S."/>
            <person name="Shin M."/>
            <person name="Vergez L."/>
            <person name="Schmutz J."/>
            <person name="Larimer F."/>
            <person name="Land M."/>
            <person name="Hauser L."/>
            <person name="Pelletier D.A."/>
            <person name="Kyrpides N."/>
            <person name="Anderson I."/>
            <person name="Oda Y."/>
            <person name="Harwood C.S."/>
            <person name="Richardson P."/>
        </authorList>
    </citation>
    <scope>NUCLEOTIDE SEQUENCE [LARGE SCALE GENOMIC DNA]</scope>
    <source>
        <strain>HaA2</strain>
    </source>
</reference>
<organism>
    <name type="scientific">Rhodopseudomonas palustris (strain HaA2)</name>
    <dbReference type="NCBI Taxonomy" id="316058"/>
    <lineage>
        <taxon>Bacteria</taxon>
        <taxon>Pseudomonadati</taxon>
        <taxon>Pseudomonadota</taxon>
        <taxon>Alphaproteobacteria</taxon>
        <taxon>Hyphomicrobiales</taxon>
        <taxon>Nitrobacteraceae</taxon>
        <taxon>Rhodopseudomonas</taxon>
    </lineage>
</organism>
<keyword id="KW-0067">ATP-binding</keyword>
<keyword id="KW-0963">Cytoplasm</keyword>
<keyword id="KW-1015">Disulfide bond</keyword>
<keyword id="KW-0547">Nucleotide-binding</keyword>
<keyword id="KW-1185">Reference proteome</keyword>
<keyword id="KW-0694">RNA-binding</keyword>
<keyword id="KW-0808">Transferase</keyword>
<keyword id="KW-0819">tRNA processing</keyword>
<keyword id="KW-0820">tRNA-binding</keyword>
<evidence type="ECO:0000255" key="1">
    <source>
        <dbReference type="HAMAP-Rule" id="MF_00144"/>
    </source>
</evidence>
<evidence type="ECO:0000305" key="2"/>
<dbReference type="EC" id="2.8.1.13" evidence="1"/>
<dbReference type="EMBL" id="CP000250">
    <property type="protein sequence ID" value="ABD08808.1"/>
    <property type="status" value="ALT_INIT"/>
    <property type="molecule type" value="Genomic_DNA"/>
</dbReference>
<dbReference type="RefSeq" id="WP_080507886.1">
    <property type="nucleotide sequence ID" value="NC_007778.1"/>
</dbReference>
<dbReference type="SMR" id="Q2ISK2"/>
<dbReference type="STRING" id="316058.RPB_4116"/>
<dbReference type="KEGG" id="rpb:RPB_4116"/>
<dbReference type="eggNOG" id="COG0482">
    <property type="taxonomic scope" value="Bacteria"/>
</dbReference>
<dbReference type="HOGENOM" id="CLU_035188_0_1_5"/>
<dbReference type="OrthoDB" id="9800696at2"/>
<dbReference type="Proteomes" id="UP000008809">
    <property type="component" value="Chromosome"/>
</dbReference>
<dbReference type="GO" id="GO:0005737">
    <property type="term" value="C:cytoplasm"/>
    <property type="evidence" value="ECO:0007669"/>
    <property type="project" value="UniProtKB-SubCell"/>
</dbReference>
<dbReference type="GO" id="GO:0005524">
    <property type="term" value="F:ATP binding"/>
    <property type="evidence" value="ECO:0007669"/>
    <property type="project" value="UniProtKB-KW"/>
</dbReference>
<dbReference type="GO" id="GO:0000049">
    <property type="term" value="F:tRNA binding"/>
    <property type="evidence" value="ECO:0007669"/>
    <property type="project" value="UniProtKB-KW"/>
</dbReference>
<dbReference type="GO" id="GO:0103016">
    <property type="term" value="F:tRNA-uridine 2-sulfurtransferase activity"/>
    <property type="evidence" value="ECO:0007669"/>
    <property type="project" value="UniProtKB-EC"/>
</dbReference>
<dbReference type="GO" id="GO:0002143">
    <property type="term" value="P:tRNA wobble position uridine thiolation"/>
    <property type="evidence" value="ECO:0007669"/>
    <property type="project" value="TreeGrafter"/>
</dbReference>
<dbReference type="CDD" id="cd01998">
    <property type="entry name" value="MnmA_TRMU-like"/>
    <property type="match status" value="1"/>
</dbReference>
<dbReference type="FunFam" id="2.30.30.280:FF:000001">
    <property type="entry name" value="tRNA-specific 2-thiouridylase MnmA"/>
    <property type="match status" value="1"/>
</dbReference>
<dbReference type="FunFam" id="3.40.50.620:FF:000115">
    <property type="entry name" value="tRNA-specific 2-thiouridylase MnmA"/>
    <property type="match status" value="1"/>
</dbReference>
<dbReference type="Gene3D" id="2.30.30.280">
    <property type="entry name" value="Adenine nucleotide alpha hydrolases-like domains"/>
    <property type="match status" value="1"/>
</dbReference>
<dbReference type="Gene3D" id="3.40.50.620">
    <property type="entry name" value="HUPs"/>
    <property type="match status" value="1"/>
</dbReference>
<dbReference type="Gene3D" id="2.40.30.10">
    <property type="entry name" value="Translation factors"/>
    <property type="match status" value="1"/>
</dbReference>
<dbReference type="HAMAP" id="MF_00144">
    <property type="entry name" value="tRNA_thiouridyl_MnmA"/>
    <property type="match status" value="1"/>
</dbReference>
<dbReference type="InterPro" id="IPR004506">
    <property type="entry name" value="MnmA-like"/>
</dbReference>
<dbReference type="InterPro" id="IPR046885">
    <property type="entry name" value="MnmA-like_C"/>
</dbReference>
<dbReference type="InterPro" id="IPR046884">
    <property type="entry name" value="MnmA-like_central"/>
</dbReference>
<dbReference type="InterPro" id="IPR023382">
    <property type="entry name" value="MnmA-like_central_sf"/>
</dbReference>
<dbReference type="InterPro" id="IPR014729">
    <property type="entry name" value="Rossmann-like_a/b/a_fold"/>
</dbReference>
<dbReference type="NCBIfam" id="NF001138">
    <property type="entry name" value="PRK00143.1"/>
    <property type="match status" value="1"/>
</dbReference>
<dbReference type="NCBIfam" id="TIGR00420">
    <property type="entry name" value="trmU"/>
    <property type="match status" value="1"/>
</dbReference>
<dbReference type="PANTHER" id="PTHR11933:SF5">
    <property type="entry name" value="MITOCHONDRIAL TRNA-SPECIFIC 2-THIOURIDYLASE 1"/>
    <property type="match status" value="1"/>
</dbReference>
<dbReference type="PANTHER" id="PTHR11933">
    <property type="entry name" value="TRNA 5-METHYLAMINOMETHYL-2-THIOURIDYLATE -METHYLTRANSFERASE"/>
    <property type="match status" value="1"/>
</dbReference>
<dbReference type="Pfam" id="PF03054">
    <property type="entry name" value="tRNA_Me_trans"/>
    <property type="match status" value="1"/>
</dbReference>
<dbReference type="Pfam" id="PF20258">
    <property type="entry name" value="tRNA_Me_trans_C"/>
    <property type="match status" value="1"/>
</dbReference>
<dbReference type="Pfam" id="PF20259">
    <property type="entry name" value="tRNA_Me_trans_M"/>
    <property type="match status" value="1"/>
</dbReference>
<dbReference type="SUPFAM" id="SSF52402">
    <property type="entry name" value="Adenine nucleotide alpha hydrolases-like"/>
    <property type="match status" value="1"/>
</dbReference>
<name>MNMA_RHOP2</name>
<feature type="chain" id="PRO_0000349775" description="tRNA-specific 2-thiouridylase MnmA">
    <location>
        <begin position="1"/>
        <end position="398"/>
    </location>
</feature>
<feature type="region of interest" description="Interaction with tRNA" evidence="1">
    <location>
        <begin position="160"/>
        <end position="162"/>
    </location>
</feature>
<feature type="active site" description="Nucleophile" evidence="1">
    <location>
        <position position="113"/>
    </location>
</feature>
<feature type="active site" description="Cysteine persulfide intermediate" evidence="1">
    <location>
        <position position="210"/>
    </location>
</feature>
<feature type="binding site" evidence="1">
    <location>
        <begin position="19"/>
        <end position="26"/>
    </location>
    <ligand>
        <name>ATP</name>
        <dbReference type="ChEBI" id="CHEBI:30616"/>
    </ligand>
</feature>
<feature type="binding site" evidence="1">
    <location>
        <position position="45"/>
    </location>
    <ligand>
        <name>ATP</name>
        <dbReference type="ChEBI" id="CHEBI:30616"/>
    </ligand>
</feature>
<feature type="binding site" evidence="1">
    <location>
        <position position="137"/>
    </location>
    <ligand>
        <name>ATP</name>
        <dbReference type="ChEBI" id="CHEBI:30616"/>
    </ligand>
</feature>
<feature type="site" description="Interaction with tRNA" evidence="1">
    <location>
        <position position="138"/>
    </location>
</feature>
<feature type="site" description="Interaction with tRNA" evidence="1">
    <location>
        <position position="352"/>
    </location>
</feature>
<feature type="disulfide bond" description="Alternate" evidence="1">
    <location>
        <begin position="113"/>
        <end position="210"/>
    </location>
</feature>
<proteinExistence type="inferred from homology"/>
<comment type="function">
    <text evidence="1">Catalyzes the 2-thiolation of uridine at the wobble position (U34) of tRNA, leading to the formation of s(2)U34.</text>
</comment>
<comment type="catalytic activity">
    <reaction evidence="1">
        <text>S-sulfanyl-L-cysteinyl-[protein] + uridine(34) in tRNA + AH2 + ATP = 2-thiouridine(34) in tRNA + L-cysteinyl-[protein] + A + AMP + diphosphate + H(+)</text>
        <dbReference type="Rhea" id="RHEA:47032"/>
        <dbReference type="Rhea" id="RHEA-COMP:10131"/>
        <dbReference type="Rhea" id="RHEA-COMP:11726"/>
        <dbReference type="Rhea" id="RHEA-COMP:11727"/>
        <dbReference type="Rhea" id="RHEA-COMP:11728"/>
        <dbReference type="ChEBI" id="CHEBI:13193"/>
        <dbReference type="ChEBI" id="CHEBI:15378"/>
        <dbReference type="ChEBI" id="CHEBI:17499"/>
        <dbReference type="ChEBI" id="CHEBI:29950"/>
        <dbReference type="ChEBI" id="CHEBI:30616"/>
        <dbReference type="ChEBI" id="CHEBI:33019"/>
        <dbReference type="ChEBI" id="CHEBI:61963"/>
        <dbReference type="ChEBI" id="CHEBI:65315"/>
        <dbReference type="ChEBI" id="CHEBI:87170"/>
        <dbReference type="ChEBI" id="CHEBI:456215"/>
        <dbReference type="EC" id="2.8.1.13"/>
    </reaction>
</comment>
<comment type="subcellular location">
    <subcellularLocation>
        <location evidence="1">Cytoplasm</location>
    </subcellularLocation>
</comment>
<comment type="similarity">
    <text evidence="1">Belongs to the MnmA/TRMU family.</text>
</comment>
<comment type="sequence caution" evidence="2">
    <conflict type="erroneous initiation">
        <sequence resource="EMBL-CDS" id="ABD08808"/>
    </conflict>
</comment>
<accession>Q2ISK2</accession>
<protein>
    <recommendedName>
        <fullName evidence="1">tRNA-specific 2-thiouridylase MnmA</fullName>
        <ecNumber evidence="1">2.8.1.13</ecNumber>
    </recommendedName>
</protein>
<gene>
    <name evidence="1" type="primary">mnmA</name>
    <name type="ordered locus">RPB_4116</name>
</gene>
<sequence>MLNSLDLAGRPQDTRVVVAMSGGVDSSATAALLKSQGYDVVGITLQLYDHGAATHRKGACCAGQDIHDARDVAERIGIPHYVLDYESRFRESVIDSFADSYALGETPVPCIECNRSVKFRDLLATARELGASALATGHYVSSRRLADGSRALICAADRDRDQSYFLFATTREQLDFLRFPLGDMTKPQTRDLARQFGLSVADKHDSQDICFVPTGRYTDVVERLKPNAMEPGEIVDLNGRVLGSHPGIVHFTVGQRRGLGIASRAPLYVLRLDAARRRVVVGPREALRMERIVLRDVNWIGDGALDRAVGDGLELFVRVRSTRAPQPAWLRAVKGGYEVELVAGEEGVSPGQACVFYDAAEGQARVLGGGFIKSAAPRSIAEPAHDDAASPALAAMRG</sequence>